<evidence type="ECO:0000250" key="1"/>
<evidence type="ECO:0000255" key="2"/>
<evidence type="ECO:0000255" key="3">
    <source>
        <dbReference type="PROSITE-ProRule" id="PRU00040"/>
    </source>
</evidence>
<evidence type="ECO:0000255" key="4">
    <source>
        <dbReference type="PROSITE-ProRule" id="PRU00076"/>
    </source>
</evidence>
<evidence type="ECO:0000255" key="5">
    <source>
        <dbReference type="PROSITE-ProRule" id="PRU00302"/>
    </source>
</evidence>
<evidence type="ECO:0000269" key="6">
    <source>
    </source>
</evidence>
<evidence type="ECO:0000269" key="7">
    <source>
    </source>
</evidence>
<evidence type="ECO:0000269" key="8">
    <source>
    </source>
</evidence>
<evidence type="ECO:0000269" key="9">
    <source>
    </source>
</evidence>
<evidence type="ECO:0000269" key="10">
    <source>
    </source>
</evidence>
<evidence type="ECO:0000269" key="11">
    <source>
    </source>
</evidence>
<evidence type="ECO:0000269" key="12">
    <source>
    </source>
</evidence>
<evidence type="ECO:0000269" key="13">
    <source>
    </source>
</evidence>
<evidence type="ECO:0000269" key="14">
    <source>
    </source>
</evidence>
<evidence type="ECO:0000269" key="15">
    <source>
    </source>
</evidence>
<evidence type="ECO:0000269" key="16">
    <source>
    </source>
</evidence>
<evidence type="ECO:0000269" key="17">
    <source>
    </source>
</evidence>
<evidence type="ECO:0000269" key="18">
    <source>
    </source>
</evidence>
<evidence type="ECO:0000269" key="19">
    <source ref="4"/>
</evidence>
<evidence type="ECO:0000305" key="20"/>
<evidence type="ECO:0007744" key="21">
    <source>
        <dbReference type="PDB" id="1ESL"/>
    </source>
</evidence>
<evidence type="ECO:0007744" key="22">
    <source>
        <dbReference type="PDB" id="1G1T"/>
    </source>
</evidence>
<evidence type="ECO:0007744" key="23">
    <source>
        <dbReference type="PDB" id="4C16"/>
    </source>
</evidence>
<evidence type="ECO:0007744" key="24">
    <source>
        <dbReference type="PDB" id="4CSY"/>
    </source>
</evidence>
<evidence type="ECO:0007829" key="25">
    <source>
        <dbReference type="PDB" id="1G1T"/>
    </source>
</evidence>
<evidence type="ECO:0007829" key="26">
    <source>
        <dbReference type="PDB" id="4C16"/>
    </source>
</evidence>
<evidence type="ECO:0007829" key="27">
    <source>
        <dbReference type="PDB" id="6EYJ"/>
    </source>
</evidence>
<reference key="1">
    <citation type="journal article" date="1990" name="Proc. Natl. Acad. Sci. U.S.A.">
        <title>Endothelial leukocyte adhesion molecule 1: direct expression cloning and functional interactions.</title>
        <authorList>
            <person name="Hession C."/>
            <person name="Osborn L."/>
            <person name="Goff D."/>
            <person name="Chi-Rosso G."/>
            <person name="Vassallo C."/>
            <person name="Pasek M."/>
            <person name="Pittack C."/>
            <person name="Tizard R."/>
            <person name="Goelz S."/>
            <person name="McCarthy K."/>
            <person name="Hopple S."/>
            <person name="Lobb R."/>
        </authorList>
    </citation>
    <scope>NUCLEOTIDE SEQUENCE [MRNA]</scope>
    <scope>FUNCTION</scope>
    <scope>INDUCTION</scope>
    <source>
        <tissue>Umbilical vein endothelial cell</tissue>
    </source>
</reference>
<reference key="2">
    <citation type="journal article" date="1989" name="Science">
        <title>Endothelial leukocyte adhesion molecule 1: an inducible receptor for neutrophils related to complement regulatory proteins and lectins.</title>
        <authorList>
            <person name="Bevilacqua M.P."/>
            <person name="Stengelin S."/>
            <person name="Gimbrone M.A. Jr."/>
            <person name="Seed B."/>
        </authorList>
    </citation>
    <scope>NUCLEOTIDE SEQUENCE [MRNA]</scope>
</reference>
<reference key="3">
    <citation type="journal article" date="1991" name="J. Biol. Chem.">
        <title>Structure and chromosomal location of the gene for endothelial-leukocyte adhesion molecule 1.</title>
        <authorList>
            <person name="Collins T."/>
            <person name="Williams A."/>
            <person name="Johnston G.I."/>
            <person name="Kim J."/>
            <person name="Eddy R."/>
            <person name="Shows T."/>
            <person name="Gimbrone M.A. Jr."/>
            <person name="Bevilacqua M.P."/>
        </authorList>
    </citation>
    <scope>NUCLEOTIDE SEQUENCE [GENOMIC DNA]</scope>
</reference>
<reference key="4">
    <citation type="submission" date="2002-08" db="EMBL/GenBank/DDBJ databases">
        <authorList>
            <consortium name="SeattleSNPs variation discovery resource"/>
        </authorList>
    </citation>
    <scope>NUCLEOTIDE SEQUENCE [GENOMIC DNA]</scope>
    <scope>VARIANTS SER-21; ILE-31; ARG-149; PRO-257; LYS-295; GLN-421; TYR-468; SER-550 AND PHE-575</scope>
</reference>
<reference key="5">
    <citation type="journal article" date="2006" name="Nature">
        <title>The DNA sequence and biological annotation of human chromosome 1.</title>
        <authorList>
            <person name="Gregory S.G."/>
            <person name="Barlow K.F."/>
            <person name="McLay K.E."/>
            <person name="Kaul R."/>
            <person name="Swarbreck D."/>
            <person name="Dunham A."/>
            <person name="Scott C.E."/>
            <person name="Howe K.L."/>
            <person name="Woodfine K."/>
            <person name="Spencer C.C.A."/>
            <person name="Jones M.C."/>
            <person name="Gillson C."/>
            <person name="Searle S."/>
            <person name="Zhou Y."/>
            <person name="Kokocinski F."/>
            <person name="McDonald L."/>
            <person name="Evans R."/>
            <person name="Phillips K."/>
            <person name="Atkinson A."/>
            <person name="Cooper R."/>
            <person name="Jones C."/>
            <person name="Hall R.E."/>
            <person name="Andrews T.D."/>
            <person name="Lloyd C."/>
            <person name="Ainscough R."/>
            <person name="Almeida J.P."/>
            <person name="Ambrose K.D."/>
            <person name="Anderson F."/>
            <person name="Andrew R.W."/>
            <person name="Ashwell R.I.S."/>
            <person name="Aubin K."/>
            <person name="Babbage A.K."/>
            <person name="Bagguley C.L."/>
            <person name="Bailey J."/>
            <person name="Beasley H."/>
            <person name="Bethel G."/>
            <person name="Bird C.P."/>
            <person name="Bray-Allen S."/>
            <person name="Brown J.Y."/>
            <person name="Brown A.J."/>
            <person name="Buckley D."/>
            <person name="Burton J."/>
            <person name="Bye J."/>
            <person name="Carder C."/>
            <person name="Chapman J.C."/>
            <person name="Clark S.Y."/>
            <person name="Clarke G."/>
            <person name="Clee C."/>
            <person name="Cobley V."/>
            <person name="Collier R.E."/>
            <person name="Corby N."/>
            <person name="Coville G.J."/>
            <person name="Davies J."/>
            <person name="Deadman R."/>
            <person name="Dunn M."/>
            <person name="Earthrowl M."/>
            <person name="Ellington A.G."/>
            <person name="Errington H."/>
            <person name="Frankish A."/>
            <person name="Frankland J."/>
            <person name="French L."/>
            <person name="Garner P."/>
            <person name="Garnett J."/>
            <person name="Gay L."/>
            <person name="Ghori M.R.J."/>
            <person name="Gibson R."/>
            <person name="Gilby L.M."/>
            <person name="Gillett W."/>
            <person name="Glithero R.J."/>
            <person name="Grafham D.V."/>
            <person name="Griffiths C."/>
            <person name="Griffiths-Jones S."/>
            <person name="Grocock R."/>
            <person name="Hammond S."/>
            <person name="Harrison E.S.I."/>
            <person name="Hart E."/>
            <person name="Haugen E."/>
            <person name="Heath P.D."/>
            <person name="Holmes S."/>
            <person name="Holt K."/>
            <person name="Howden P.J."/>
            <person name="Hunt A.R."/>
            <person name="Hunt S.E."/>
            <person name="Hunter G."/>
            <person name="Isherwood J."/>
            <person name="James R."/>
            <person name="Johnson C."/>
            <person name="Johnson D."/>
            <person name="Joy A."/>
            <person name="Kay M."/>
            <person name="Kershaw J.K."/>
            <person name="Kibukawa M."/>
            <person name="Kimberley A.M."/>
            <person name="King A."/>
            <person name="Knights A.J."/>
            <person name="Lad H."/>
            <person name="Laird G."/>
            <person name="Lawlor S."/>
            <person name="Leongamornlert D.A."/>
            <person name="Lloyd D.M."/>
            <person name="Loveland J."/>
            <person name="Lovell J."/>
            <person name="Lush M.J."/>
            <person name="Lyne R."/>
            <person name="Martin S."/>
            <person name="Mashreghi-Mohammadi M."/>
            <person name="Matthews L."/>
            <person name="Matthews N.S.W."/>
            <person name="McLaren S."/>
            <person name="Milne S."/>
            <person name="Mistry S."/>
            <person name="Moore M.J.F."/>
            <person name="Nickerson T."/>
            <person name="O'Dell C.N."/>
            <person name="Oliver K."/>
            <person name="Palmeiri A."/>
            <person name="Palmer S.A."/>
            <person name="Parker A."/>
            <person name="Patel D."/>
            <person name="Pearce A.V."/>
            <person name="Peck A.I."/>
            <person name="Pelan S."/>
            <person name="Phelps K."/>
            <person name="Phillimore B.J."/>
            <person name="Plumb R."/>
            <person name="Rajan J."/>
            <person name="Raymond C."/>
            <person name="Rouse G."/>
            <person name="Saenphimmachak C."/>
            <person name="Sehra H.K."/>
            <person name="Sheridan E."/>
            <person name="Shownkeen R."/>
            <person name="Sims S."/>
            <person name="Skuce C.D."/>
            <person name="Smith M."/>
            <person name="Steward C."/>
            <person name="Subramanian S."/>
            <person name="Sycamore N."/>
            <person name="Tracey A."/>
            <person name="Tromans A."/>
            <person name="Van Helmond Z."/>
            <person name="Wall M."/>
            <person name="Wallis J.M."/>
            <person name="White S."/>
            <person name="Whitehead S.L."/>
            <person name="Wilkinson J.E."/>
            <person name="Willey D.L."/>
            <person name="Williams H."/>
            <person name="Wilming L."/>
            <person name="Wray P.W."/>
            <person name="Wu Z."/>
            <person name="Coulson A."/>
            <person name="Vaudin M."/>
            <person name="Sulston J.E."/>
            <person name="Durbin R.M."/>
            <person name="Hubbard T."/>
            <person name="Wooster R."/>
            <person name="Dunham I."/>
            <person name="Carter N.P."/>
            <person name="McVean G."/>
            <person name="Ross M.T."/>
            <person name="Harrow J."/>
            <person name="Olson M.V."/>
            <person name="Beck S."/>
            <person name="Rogers J."/>
            <person name="Bentley D.R."/>
        </authorList>
    </citation>
    <scope>NUCLEOTIDE SEQUENCE [LARGE SCALE GENOMIC DNA]</scope>
</reference>
<reference key="6">
    <citation type="submission" date="2005-07" db="EMBL/GenBank/DDBJ databases">
        <authorList>
            <person name="Mural R.J."/>
            <person name="Istrail S."/>
            <person name="Sutton G.G."/>
            <person name="Florea L."/>
            <person name="Halpern A.L."/>
            <person name="Mobarry C.M."/>
            <person name="Lippert R."/>
            <person name="Walenz B."/>
            <person name="Shatkay H."/>
            <person name="Dew I."/>
            <person name="Miller J.R."/>
            <person name="Flanigan M.J."/>
            <person name="Edwards N.J."/>
            <person name="Bolanos R."/>
            <person name="Fasulo D."/>
            <person name="Halldorsson B.V."/>
            <person name="Hannenhalli S."/>
            <person name="Turner R."/>
            <person name="Yooseph S."/>
            <person name="Lu F."/>
            <person name="Nusskern D.R."/>
            <person name="Shue B.C."/>
            <person name="Zheng X.H."/>
            <person name="Zhong F."/>
            <person name="Delcher A.L."/>
            <person name="Huson D.H."/>
            <person name="Kravitz S.A."/>
            <person name="Mouchard L."/>
            <person name="Reinert K."/>
            <person name="Remington K.A."/>
            <person name="Clark A.G."/>
            <person name="Waterman M.S."/>
            <person name="Eichler E.E."/>
            <person name="Adams M.D."/>
            <person name="Hunkapiller M.W."/>
            <person name="Myers E.W."/>
            <person name="Venter J.C."/>
        </authorList>
    </citation>
    <scope>NUCLEOTIDE SEQUENCE [LARGE SCALE GENOMIC DNA]</scope>
</reference>
<reference key="7">
    <citation type="journal article" date="2004" name="Genome Res.">
        <title>The status, quality, and expansion of the NIH full-length cDNA project: the Mammalian Gene Collection (MGC).</title>
        <authorList>
            <consortium name="The MGC Project Team"/>
        </authorList>
    </citation>
    <scope>NUCLEOTIDE SEQUENCE [LARGE SCALE MRNA]</scope>
</reference>
<reference key="8">
    <citation type="journal article" date="1990" name="Science">
        <title>ELAM-1 mediates cell adhesion by recognition of a carbohydrate ligand, sialyl-Lex.</title>
        <authorList>
            <person name="Phillips M.L."/>
            <person name="Nudelman E."/>
            <person name="Gaeta F.C."/>
            <person name="Perez M."/>
            <person name="Singhal A.K."/>
            <person name="Hakomori S."/>
            <person name="Paulson J.C."/>
        </authorList>
    </citation>
    <scope>LIGAND</scope>
</reference>
<reference key="9">
    <citation type="journal article" date="2008" name="J. Immunol.">
        <title>Endoglycan, a member of the CD34 family of sialomucins, is a ligand for the vascular selectins.</title>
        <authorList>
            <person name="Kerr S.C."/>
            <person name="Fieger C.B."/>
            <person name="Snapp K.R."/>
            <person name="Rosen S.D."/>
        </authorList>
    </citation>
    <scope>INTERACTION WITH PODXL2</scope>
</reference>
<reference key="10">
    <citation type="journal article" date="2017" name="J. Biol. Chem.">
        <title>Glycan Bound to the Selectin Low Affinity State Engages Glu-88 to Stabilize the High Affinity State under Force.</title>
        <authorList>
            <person name="Mehta-D'souza P."/>
            <person name="Klopocki A.G."/>
            <person name="Oganesyan V."/>
            <person name="Terzyan S."/>
            <person name="Mather T."/>
            <person name="Li Z."/>
            <person name="Panicker S.R."/>
            <person name="Zhu C."/>
            <person name="McEver R.P."/>
        </authorList>
    </citation>
    <scope>SUBCELLULAR LOCATION</scope>
    <scope>MUTAGENESIS OF GLU-109</scope>
    <scope>FUNCTION</scope>
</reference>
<reference key="11">
    <citation type="journal article" date="1993" name="FEBS Lett.">
        <title>Modelling the carbohydrate recognition domain of human E-selectin.</title>
        <authorList>
            <person name="Mills A."/>
        </authorList>
    </citation>
    <scope>3D-STRUCTURE MODELING OF LECTIN DOMAIN</scope>
</reference>
<reference key="12">
    <citation type="journal article" date="1994" name="Nature">
        <title>Insight into E-selectin/ligand interaction from the crystal structure and mutagenesis of the lec/EGF domains.</title>
        <authorList>
            <person name="Graves B.J."/>
            <person name="Crowther R.L."/>
            <person name="Chandran C."/>
            <person name="Rumberger J.M."/>
            <person name="Li S."/>
            <person name="Huang K.-S."/>
            <person name="Presky D.H."/>
            <person name="Familletti P.C."/>
            <person name="Wolitzky B.A."/>
            <person name="Burns D.K."/>
        </authorList>
    </citation>
    <scope>X-RAY CRYSTALLOGRAPHY (2.0 ANGSTROMS) OF 22-178</scope>
</reference>
<reference key="13">
    <citation type="journal article" date="2000" name="Cell">
        <title>Insights into the molecular basis of leukocyte tethering and rolling revealed by structures of P- and E-selectin bound to SLe(X) and PSGL-1.</title>
        <authorList>
            <person name="Somers W.S."/>
            <person name="Tang J."/>
            <person name="Shaw G.D."/>
            <person name="Camphausen R.T."/>
        </authorList>
    </citation>
    <scope>X-RAY CRYSTALLOGRAPHY (1.9 ANGSTROMS) OF 22-178 IN COMPLEX WITH CALCIUM IONS AND SELPLG</scope>
    <scope>SUBUNIT</scope>
    <scope>DISULFIDE BONDS</scope>
</reference>
<reference key="14">
    <citation type="journal article" date="2001" name="Cell">
        <authorList>
            <person name="Somers W.S."/>
            <person name="Tang J."/>
            <person name="Shaw G.D."/>
            <person name="Camphausen R.T."/>
        </authorList>
    </citation>
    <scope>ERRATUM OF PUBMED:11081633</scope>
</reference>
<reference evidence="23 24" key="15">
    <citation type="journal article" date="2016" name="J. Mol. Cell Biol.">
        <title>E-selectin ligand complexes adopt an extended high-affinity conformation.</title>
        <authorList>
            <person name="Preston R.C."/>
            <person name="Jakob R.P."/>
            <person name="Binder F.P."/>
            <person name="Sager C.P."/>
            <person name="Ernst B."/>
            <person name="Maier T."/>
        </authorList>
    </citation>
    <scope>X-RAY CRYSTALLOGRAPHY (1.93 ANGSTROMS) OF 22-301 IN COMPLEX WITH CALCIUM AND CARBOHYDRATE</scope>
    <scope>GLYCOSYLATION AT ASN-25; ASN-145; ASN-160; ASN-179; ASN-199; ASN-203 AND ASN-265</scope>
    <scope>DISULFIDE BONDS</scope>
</reference>
<reference key="16">
    <citation type="journal article" date="1994" name="Hum. Mol. Genet.">
        <title>E-selectin polymorphism and atherosclerosis: an association study.</title>
        <authorList>
            <person name="Wenzel K."/>
            <person name="Felix S."/>
            <person name="Kleber F.X."/>
            <person name="Brachold R."/>
            <person name="Menke T."/>
            <person name="Schattke S."/>
            <person name="Schulte K.L."/>
            <person name="Glaser C."/>
            <person name="Rohde K."/>
            <person name="Baumann G."/>
            <person name="Speer A."/>
        </authorList>
    </citation>
    <scope>VARIANT ARG-149</scope>
</reference>
<reference key="17">
    <citation type="journal article" date="1996" name="Hum. Genet.">
        <title>DNA polymorphisms in adhesion molecule genes -- a new risk factor for early atherosclerosis.</title>
        <authorList>
            <person name="Wenzel K."/>
            <person name="Ernst M."/>
            <person name="Rohde K."/>
            <person name="Baumann G."/>
            <person name="Speer A."/>
        </authorList>
    </citation>
    <scope>VARIANTS ARG-149 AND PHE-575</scope>
</reference>
<reference key="18">
    <citation type="journal article" date="1999" name="J. Biomed. Sci.">
        <title>A PstI polymorphism detects the mutation of serine-128 to arginine in CD 62E gene - a risk factor for coronary artery disease.</title>
        <authorList>
            <person name="Ye S.Q."/>
            <person name="Usher D."/>
            <person name="Virgil D."/>
            <person name="Zhang L.Q."/>
            <person name="Yochim S.E."/>
            <person name="Gupta R."/>
        </authorList>
    </citation>
    <scope>VARIANT ARG-149</scope>
</reference>
<reference key="19">
    <citation type="journal article" date="1999" name="Nat. Genet.">
        <title>Patterns of single-nucleotide polymorphisms in candidate genes for blood-pressure homeostasis.</title>
        <authorList>
            <person name="Halushka M.K."/>
            <person name="Fan J.-B."/>
            <person name="Bentley K."/>
            <person name="Hsie L."/>
            <person name="Shen N."/>
            <person name="Weder A."/>
            <person name="Cooper R."/>
            <person name="Lipshutz R."/>
            <person name="Chakravarti A."/>
        </authorList>
    </citation>
    <scope>VARIANTS ARG-149; TYR-468 AND PHE-575</scope>
</reference>
<reference key="20">
    <citation type="journal article" date="2000" name="Hum. Genet.">
        <title>Relationship between E-selectin L/F554 polymorphism and blood pressure in the Stanislas cohort.</title>
        <authorList>
            <person name="Sass C."/>
            <person name="Pallaud C."/>
            <person name="Zannad F."/>
            <person name="Visvikis S."/>
        </authorList>
    </citation>
    <scope>VARIANT PHE-575</scope>
</reference>
<reference key="21">
    <citation type="journal article" date="2003" name="Arterioscler. Thromb. Vasc. Biol.">
        <title>E-selectin polymorphism associated with myocardial infarction causes enhanced leukocyte-endothelial interactions under flow conditions.</title>
        <authorList>
            <person name="Yoshida M."/>
            <person name="Takano Y."/>
            <person name="Sasaoka T."/>
            <person name="Izumi T."/>
            <person name="Kimura A."/>
        </authorList>
    </citation>
    <scope>VARIANT ARG-149</scope>
    <scope>SUBCELLULAR LOCATION</scope>
    <scope>CHARACTERIZATION OF VARIANT ARG-149</scope>
</reference>
<reference key="22">
    <citation type="journal article" date="2014" name="Glycobiology">
        <title>Implications of the E-selectin S128R mutation for drug discovery.</title>
        <authorList>
            <person name="Preston R.C."/>
            <person name="Rabbani S."/>
            <person name="Binder F.P."/>
            <person name="Moes S."/>
            <person name="Magnani J.L."/>
            <person name="Ernst B."/>
        </authorList>
    </citation>
    <scope>CHARACTERIZATION OF VARIANT ARG-149</scope>
</reference>
<reference key="23">
    <citation type="journal article" date="2015" name="Proc. Natl. Acad. Sci. U.S.A.">
        <title>Neomorphic effects of recurrent somatic mutations in Yin Yang 1 in insulin-producing adenomas.</title>
        <authorList>
            <person name="Cromer M.K."/>
            <person name="Choi M."/>
            <person name="Nelson-Williams C."/>
            <person name="Fonseca A.L."/>
            <person name="Kunstman J.W."/>
            <person name="Korah R.M."/>
            <person name="Overton J.D."/>
            <person name="Mane S."/>
            <person name="Kenney B."/>
            <person name="Malchoff C.D."/>
            <person name="Stalberg P."/>
            <person name="Akerstroem G."/>
            <person name="Westin G."/>
            <person name="Hellman P."/>
            <person name="Carling T."/>
            <person name="Bjoerklund P."/>
            <person name="Lifton R.P."/>
        </authorList>
    </citation>
    <scope>VARIANT LEU-545</scope>
</reference>
<name>LYAM2_HUMAN</name>
<accession>P16581</accession>
<accession>A2RRD6</accession>
<accession>P16111</accession>
<feature type="signal peptide">
    <location>
        <begin position="1"/>
        <end position="21"/>
    </location>
</feature>
<feature type="chain" id="PRO_0000017492" description="E-selectin">
    <location>
        <begin position="22"/>
        <end position="610"/>
    </location>
</feature>
<feature type="topological domain" description="Extracellular" evidence="2">
    <location>
        <begin position="22"/>
        <end position="556"/>
    </location>
</feature>
<feature type="transmembrane region" description="Helical" evidence="2">
    <location>
        <begin position="557"/>
        <end position="578"/>
    </location>
</feature>
<feature type="topological domain" description="Cytoplasmic" evidence="2">
    <location>
        <begin position="579"/>
        <end position="610"/>
    </location>
</feature>
<feature type="domain" description="C-type lectin" evidence="3">
    <location>
        <begin position="22"/>
        <end position="139"/>
    </location>
</feature>
<feature type="domain" description="EGF-like" evidence="4">
    <location>
        <begin position="140"/>
        <end position="175"/>
    </location>
</feature>
<feature type="domain" description="Sushi 1" evidence="5">
    <location>
        <begin position="178"/>
        <end position="239"/>
    </location>
</feature>
<feature type="domain" description="Sushi 2" evidence="5">
    <location>
        <begin position="240"/>
        <end position="301"/>
    </location>
</feature>
<feature type="domain" description="Sushi 3" evidence="5">
    <location>
        <begin position="303"/>
        <end position="364"/>
    </location>
</feature>
<feature type="domain" description="Sushi 4" evidence="5">
    <location>
        <begin position="366"/>
        <end position="427"/>
    </location>
</feature>
<feature type="domain" description="Sushi 5" evidence="5">
    <location>
        <begin position="429"/>
        <end position="490"/>
    </location>
</feature>
<feature type="domain" description="Sushi 6" evidence="5">
    <location>
        <begin position="491"/>
        <end position="549"/>
    </location>
</feature>
<feature type="binding site" evidence="14 23 24">
    <location>
        <begin position="101"/>
        <end position="109"/>
    </location>
    <ligand>
        <name>a carbohydrate</name>
        <dbReference type="ChEBI" id="CHEBI:16646"/>
    </ligand>
</feature>
<feature type="binding site" evidence="14 21 23 24">
    <location>
        <position position="101"/>
    </location>
    <ligand>
        <name>Ca(2+)</name>
        <dbReference type="ChEBI" id="CHEBI:29108"/>
    </ligand>
</feature>
<feature type="binding site" evidence="8 14 21 22 23 24">
    <location>
        <position position="103"/>
    </location>
    <ligand>
        <name>Ca(2+)</name>
        <dbReference type="ChEBI" id="CHEBI:29108"/>
    </ligand>
</feature>
<feature type="binding site" evidence="8 14 23 24">
    <location>
        <position position="109"/>
    </location>
    <ligand>
        <name>Ca(2+)</name>
        <dbReference type="ChEBI" id="CHEBI:29108"/>
    </ligand>
</feature>
<feature type="binding site" evidence="14 23 24">
    <location>
        <begin position="113"/>
        <end position="118"/>
    </location>
    <ligand>
        <name>a carbohydrate</name>
        <dbReference type="ChEBI" id="CHEBI:16646"/>
    </ligand>
</feature>
<feature type="binding site" evidence="14 23 24">
    <location>
        <begin position="126"/>
        <end position="128"/>
    </location>
    <ligand>
        <name>a carbohydrate</name>
        <dbReference type="ChEBI" id="CHEBI:16646"/>
    </ligand>
</feature>
<feature type="binding site" evidence="8 14 21 22 23 24">
    <location>
        <position position="126"/>
    </location>
    <ligand>
        <name>Ca(2+)</name>
        <dbReference type="ChEBI" id="CHEBI:29108"/>
    </ligand>
</feature>
<feature type="binding site" evidence="8 14 21 22 23 24">
    <location>
        <position position="127"/>
    </location>
    <ligand>
        <name>Ca(2+)</name>
        <dbReference type="ChEBI" id="CHEBI:29108"/>
    </ligand>
</feature>
<feature type="glycosylation site" description="N-linked (GlcNAc...) asparagine" evidence="14 23 24">
    <location>
        <position position="25"/>
    </location>
</feature>
<feature type="glycosylation site" description="N-linked (GlcNAc...) asparagine" evidence="14 23 24">
    <location>
        <position position="145"/>
    </location>
</feature>
<feature type="glycosylation site" description="N-linked (GlcNAc...) asparagine" evidence="14 23 24">
    <location>
        <position position="160"/>
    </location>
</feature>
<feature type="glycosylation site" description="N-linked (GlcNAc...) asparagine" evidence="14 23 24">
    <location>
        <position position="179"/>
    </location>
</feature>
<feature type="glycosylation site" description="N-linked (GlcNAc...) asparagine" evidence="14 23 24">
    <location>
        <position position="199"/>
    </location>
</feature>
<feature type="glycosylation site" description="N-linked (GlcNAc...) asparagine" evidence="14 23 24">
    <location>
        <position position="203"/>
    </location>
</feature>
<feature type="glycosylation site" description="N-linked (GlcNAc...) asparagine" evidence="14 23 24">
    <location>
        <position position="265"/>
    </location>
</feature>
<feature type="glycosylation site" description="N-linked (GlcNAc...) asparagine" evidence="2">
    <location>
        <position position="312"/>
    </location>
</feature>
<feature type="glycosylation site" description="N-linked (GlcNAc...) asparagine" evidence="2">
    <location>
        <position position="332"/>
    </location>
</feature>
<feature type="glycosylation site" description="N-linked (GlcNAc...) asparagine" evidence="2">
    <location>
        <position position="503"/>
    </location>
</feature>
<feature type="glycosylation site" description="N-linked (GlcNAc...) asparagine" evidence="2">
    <location>
        <position position="527"/>
    </location>
</feature>
<feature type="disulfide bond" evidence="8 14 21 22 23 24">
    <location>
        <begin position="40"/>
        <end position="138"/>
    </location>
</feature>
<feature type="disulfide bond" evidence="8 14 21 22 23 24">
    <location>
        <begin position="111"/>
        <end position="130"/>
    </location>
</feature>
<feature type="disulfide bond" evidence="8 14 21 22 23 24">
    <location>
        <begin position="143"/>
        <end position="154"/>
    </location>
</feature>
<feature type="disulfide bond" evidence="8 14 21 22 23 24">
    <location>
        <begin position="148"/>
        <end position="163"/>
    </location>
</feature>
<feature type="disulfide bond" evidence="8 14 21 22 23 24">
    <location>
        <begin position="165"/>
        <end position="174"/>
    </location>
</feature>
<feature type="disulfide bond" evidence="14 23 24">
    <location>
        <begin position="180"/>
        <end position="224"/>
    </location>
</feature>
<feature type="disulfide bond" evidence="14 23 24">
    <location>
        <begin position="193"/>
        <end position="206"/>
    </location>
</feature>
<feature type="disulfide bond" evidence="14 23 24">
    <location>
        <begin position="210"/>
        <end position="237"/>
    </location>
</feature>
<feature type="disulfide bond" evidence="14 23 24">
    <location>
        <begin position="242"/>
        <end position="286"/>
    </location>
</feature>
<feature type="disulfide bond" evidence="14 23 24">
    <location>
        <begin position="255"/>
        <end position="268"/>
    </location>
</feature>
<feature type="disulfide bond" evidence="14 23 24">
    <location>
        <begin position="272"/>
        <end position="299"/>
    </location>
</feature>
<feature type="disulfide bond" evidence="1">
    <location>
        <begin position="304"/>
        <end position="349"/>
    </location>
</feature>
<feature type="disulfide bond" evidence="1">
    <location>
        <begin position="335"/>
        <end position="362"/>
    </location>
</feature>
<feature type="disulfide bond" evidence="1">
    <location>
        <begin position="367"/>
        <end position="412"/>
    </location>
</feature>
<feature type="disulfide bond" evidence="1">
    <location>
        <begin position="398"/>
        <end position="425"/>
    </location>
</feature>
<feature type="disulfide bond" evidence="1">
    <location>
        <begin position="430"/>
        <end position="475"/>
    </location>
</feature>
<feature type="disulfide bond" evidence="1">
    <location>
        <begin position="461"/>
        <end position="488"/>
    </location>
</feature>
<feature type="disulfide bond" evidence="1">
    <location>
        <begin position="493"/>
        <end position="534"/>
    </location>
</feature>
<feature type="disulfide bond" evidence="1">
    <location>
        <begin position="520"/>
        <end position="547"/>
    </location>
</feature>
<feature type="sequence variant" id="VAR_014300" description="In dbSNP:rs3917407." evidence="19">
    <original>A</original>
    <variation>S</variation>
    <location>
        <position position="21"/>
    </location>
</feature>
<feature type="sequence variant" id="VAR_014301" description="In dbSNP:rs3917408." evidence="19">
    <original>M</original>
    <variation>I</variation>
    <location>
        <position position="31"/>
    </location>
</feature>
<feature type="sequence variant" id="VAR_011790" description="In dbSNP:rs5360.">
    <original>C</original>
    <variation>W</variation>
    <location>
        <position position="130"/>
    </location>
</feature>
<feature type="sequence variant" id="VAR_004191" description="Probable risk factor for coronary artery disease; no effect on ligand-specificity; may increase levels of rolling and adhesion of neutrophils and peripheral blood mononuclear cells to the endothelium; may induce constitutive stimulation of the MAPK signaling pathway, in the absence of leukocyte adhesion; dbSNP:rs5361." evidence="6 9 12 16 17 18 19">
    <original>S</original>
    <variation>R</variation>
    <location>
        <position position="149"/>
    </location>
</feature>
<feature type="sequence variant" id="VAR_014302" description="In dbSNP:rs3917422." evidence="19">
    <original>Q</original>
    <variation>P</variation>
    <location>
        <position position="257"/>
    </location>
</feature>
<feature type="sequence variant" id="VAR_011791" description="In dbSNP:rs5364." evidence="19">
    <original>E</original>
    <variation>K</variation>
    <location>
        <position position="295"/>
    </location>
</feature>
<feature type="sequence variant" id="VAR_011792" description="In dbSNP:rs5366." evidence="19">
    <original>E</original>
    <variation>Q</variation>
    <location>
        <position position="421"/>
    </location>
</feature>
<feature type="sequence variant" id="VAR_011793" description="In dbSNP:rs5368." evidence="6 19">
    <original>H</original>
    <variation>Y</variation>
    <location>
        <position position="468"/>
    </location>
</feature>
<feature type="sequence variant" id="VAR_074189" evidence="13">
    <original>P</original>
    <variation>L</variation>
    <location>
        <position position="545"/>
    </location>
</feature>
<feature type="sequence variant" id="VAR_014303" description="In dbSNP:rs3917429." evidence="19">
    <original>P</original>
    <variation>S</variation>
    <location>
        <position position="550"/>
    </location>
</feature>
<feature type="sequence variant" id="VAR_011794" description="In dbSNP:rs5355." evidence="6 7 17 19">
    <original>L</original>
    <variation>F</variation>
    <location>
        <position position="575"/>
    </location>
</feature>
<feature type="mutagenesis site" description="Decreased adhesion to cells expressing SELPLG." evidence="15">
    <original>E</original>
    <variation>D</variation>
    <location>
        <position position="109"/>
    </location>
</feature>
<feature type="strand" evidence="25">
    <location>
        <begin position="23"/>
        <end position="26"/>
    </location>
</feature>
<feature type="helix" evidence="25">
    <location>
        <begin position="33"/>
        <end position="43"/>
    </location>
</feature>
<feature type="strand" evidence="25">
    <location>
        <begin position="44"/>
        <end position="47"/>
    </location>
</feature>
<feature type="helix" evidence="25">
    <location>
        <begin position="53"/>
        <end position="62"/>
    </location>
</feature>
<feature type="strand" evidence="25">
    <location>
        <begin position="70"/>
        <end position="77"/>
    </location>
</feature>
<feature type="strand" evidence="25">
    <location>
        <begin position="80"/>
        <end position="83"/>
    </location>
</feature>
<feature type="turn" evidence="25">
    <location>
        <begin position="84"/>
        <end position="86"/>
    </location>
</feature>
<feature type="turn" evidence="25">
    <location>
        <begin position="92"/>
        <end position="94"/>
    </location>
</feature>
<feature type="strand" evidence="25">
    <location>
        <begin position="111"/>
        <end position="114"/>
    </location>
</feature>
<feature type="strand" evidence="25">
    <location>
        <begin position="119"/>
        <end position="121"/>
    </location>
</feature>
<feature type="strand" evidence="25">
    <location>
        <begin position="125"/>
        <end position="128"/>
    </location>
</feature>
<feature type="strand" evidence="25">
    <location>
        <begin position="134"/>
        <end position="140"/>
    </location>
</feature>
<feature type="helix" evidence="25">
    <location>
        <begin position="147"/>
        <end position="150"/>
    </location>
</feature>
<feature type="strand" evidence="25">
    <location>
        <begin position="151"/>
        <end position="157"/>
    </location>
</feature>
<feature type="strand" evidence="25">
    <location>
        <begin position="160"/>
        <end position="165"/>
    </location>
</feature>
<feature type="strand" evidence="25">
    <location>
        <begin position="169"/>
        <end position="171"/>
    </location>
</feature>
<feature type="strand" evidence="26">
    <location>
        <begin position="189"/>
        <end position="194"/>
    </location>
</feature>
<feature type="strand" evidence="26">
    <location>
        <begin position="196"/>
        <end position="198"/>
    </location>
</feature>
<feature type="strand" evidence="26">
    <location>
        <begin position="205"/>
        <end position="210"/>
    </location>
</feature>
<feature type="strand" evidence="26">
    <location>
        <begin position="214"/>
        <end position="217"/>
    </location>
</feature>
<feature type="strand" evidence="26">
    <location>
        <begin position="222"/>
        <end position="224"/>
    </location>
</feature>
<feature type="strand" evidence="26">
    <location>
        <begin position="230"/>
        <end position="232"/>
    </location>
</feature>
<feature type="strand" evidence="26">
    <location>
        <begin position="237"/>
        <end position="239"/>
    </location>
</feature>
<feature type="strand" evidence="26">
    <location>
        <begin position="251"/>
        <end position="254"/>
    </location>
</feature>
<feature type="strand" evidence="27">
    <location>
        <begin position="256"/>
        <end position="258"/>
    </location>
</feature>
<feature type="strand" evidence="26">
    <location>
        <begin position="267"/>
        <end position="272"/>
    </location>
</feature>
<feature type="strand" evidence="26">
    <location>
        <begin position="277"/>
        <end position="280"/>
    </location>
</feature>
<feature type="strand" evidence="26">
    <location>
        <begin position="282"/>
        <end position="286"/>
    </location>
</feature>
<feature type="strand" evidence="26">
    <location>
        <begin position="292"/>
        <end position="294"/>
    </location>
</feature>
<feature type="strand" evidence="26">
    <location>
        <begin position="298"/>
        <end position="300"/>
    </location>
</feature>
<dbReference type="EMBL" id="M30640">
    <property type="protein sequence ID" value="AAA52377.1"/>
    <property type="molecule type" value="mRNA"/>
</dbReference>
<dbReference type="EMBL" id="M61893">
    <property type="protein sequence ID" value="AAA52375.1"/>
    <property type="molecule type" value="Genomic_DNA"/>
</dbReference>
<dbReference type="EMBL" id="M61895">
    <property type="protein sequence ID" value="AAA52375.1"/>
    <property type="status" value="JOINED"/>
    <property type="molecule type" value="Genomic_DNA"/>
</dbReference>
<dbReference type="EMBL" id="M61887">
    <property type="protein sequence ID" value="AAA52375.1"/>
    <property type="status" value="JOINED"/>
    <property type="molecule type" value="Genomic_DNA"/>
</dbReference>
<dbReference type="EMBL" id="M61888">
    <property type="protein sequence ID" value="AAA52375.1"/>
    <property type="status" value="JOINED"/>
    <property type="molecule type" value="Genomic_DNA"/>
</dbReference>
<dbReference type="EMBL" id="M61890">
    <property type="protein sequence ID" value="AAA52375.1"/>
    <property type="status" value="JOINED"/>
    <property type="molecule type" value="Genomic_DNA"/>
</dbReference>
<dbReference type="EMBL" id="M61891">
    <property type="protein sequence ID" value="AAA52375.1"/>
    <property type="status" value="JOINED"/>
    <property type="molecule type" value="Genomic_DNA"/>
</dbReference>
<dbReference type="EMBL" id="M61892">
    <property type="protein sequence ID" value="AAA52375.1"/>
    <property type="status" value="JOINED"/>
    <property type="molecule type" value="Genomic_DNA"/>
</dbReference>
<dbReference type="EMBL" id="M24736">
    <property type="protein sequence ID" value="AAA52376.1"/>
    <property type="molecule type" value="mRNA"/>
</dbReference>
<dbReference type="EMBL" id="AF540378">
    <property type="protein sequence ID" value="AAN01237.1"/>
    <property type="molecule type" value="Genomic_DNA"/>
</dbReference>
<dbReference type="EMBL" id="AL021940">
    <property type="status" value="NOT_ANNOTATED_CDS"/>
    <property type="molecule type" value="Genomic_DNA"/>
</dbReference>
<dbReference type="EMBL" id="CH471067">
    <property type="protein sequence ID" value="EAW90860.1"/>
    <property type="molecule type" value="Genomic_DNA"/>
</dbReference>
<dbReference type="EMBL" id="BC131551">
    <property type="protein sequence ID" value="AAI31552.1"/>
    <property type="molecule type" value="mRNA"/>
</dbReference>
<dbReference type="EMBL" id="BC142677">
    <property type="protein sequence ID" value="AAI42678.1"/>
    <property type="molecule type" value="mRNA"/>
</dbReference>
<dbReference type="EMBL" id="BC142711">
    <property type="protein sequence ID" value="AAI42712.1"/>
    <property type="molecule type" value="mRNA"/>
</dbReference>
<dbReference type="CCDS" id="CCDS1283.1"/>
<dbReference type="PIR" id="A38615">
    <property type="entry name" value="A35046"/>
</dbReference>
<dbReference type="RefSeq" id="NP_000441.2">
    <property type="nucleotide sequence ID" value="NM_000450.2"/>
</dbReference>
<dbReference type="PDB" id="1ESL">
    <property type="method" value="X-ray"/>
    <property type="resolution" value="2.00 A"/>
    <property type="chains" value="A=22-183"/>
</dbReference>
<dbReference type="PDB" id="1G1T">
    <property type="method" value="X-ray"/>
    <property type="resolution" value="1.50 A"/>
    <property type="chains" value="A=22-178"/>
</dbReference>
<dbReference type="PDB" id="4C16">
    <property type="method" value="X-ray"/>
    <property type="resolution" value="1.93 A"/>
    <property type="chains" value="A/B=22-301"/>
</dbReference>
<dbReference type="PDB" id="4CSY">
    <property type="method" value="X-ray"/>
    <property type="resolution" value="2.41 A"/>
    <property type="chains" value="A/B=22-301"/>
</dbReference>
<dbReference type="PDB" id="6EYI">
    <property type="method" value="X-ray"/>
    <property type="resolution" value="2.04 A"/>
    <property type="chains" value="A=22-301"/>
</dbReference>
<dbReference type="PDB" id="6EYJ">
    <property type="method" value="X-ray"/>
    <property type="resolution" value="2.20 A"/>
    <property type="chains" value="A/B=22-301"/>
</dbReference>
<dbReference type="PDB" id="6EYK">
    <property type="method" value="X-ray"/>
    <property type="resolution" value="2.21 A"/>
    <property type="chains" value="A=22-301"/>
</dbReference>
<dbReference type="PDB" id="8R5L">
    <property type="method" value="X-ray"/>
    <property type="resolution" value="2.20 A"/>
    <property type="chains" value="A=22-301"/>
</dbReference>
<dbReference type="PDB" id="8R5M">
    <property type="method" value="X-ray"/>
    <property type="resolution" value="2.49 A"/>
    <property type="chains" value="A=22-301"/>
</dbReference>
<dbReference type="PDBsum" id="1ESL"/>
<dbReference type="PDBsum" id="1G1T"/>
<dbReference type="PDBsum" id="4C16"/>
<dbReference type="PDBsum" id="4CSY"/>
<dbReference type="PDBsum" id="6EYI"/>
<dbReference type="PDBsum" id="6EYJ"/>
<dbReference type="PDBsum" id="6EYK"/>
<dbReference type="PDBsum" id="8R5L"/>
<dbReference type="PDBsum" id="8R5M"/>
<dbReference type="SMR" id="P16581"/>
<dbReference type="BioGRID" id="112301">
    <property type="interactions" value="17"/>
</dbReference>
<dbReference type="DIP" id="DIP-58639N"/>
<dbReference type="FunCoup" id="P16581">
    <property type="interactions" value="291"/>
</dbReference>
<dbReference type="IntAct" id="P16581">
    <property type="interactions" value="14"/>
</dbReference>
<dbReference type="MINT" id="P16581"/>
<dbReference type="STRING" id="9606.ENSP00000331736"/>
<dbReference type="BindingDB" id="P16581"/>
<dbReference type="ChEMBL" id="CHEMBL3890"/>
<dbReference type="DrugBank" id="DB04426">
    <property type="generic name" value="Alpha-Methyl-N-Acetyl-D-Glucosamine"/>
</dbReference>
<dbReference type="DrugBank" id="DB06197">
    <property type="generic name" value="Bimosiamose"/>
</dbReference>
<dbReference type="DrugBank" id="DB01136">
    <property type="generic name" value="Carvedilol"/>
</dbReference>
<dbReference type="DrugBank" id="DB06423">
    <property type="generic name" value="Endostatin"/>
</dbReference>
<dbReference type="DrugBank" id="DB03721">
    <property type="generic name" value="N-acetyl-alpha-neuraminic acid"/>
</dbReference>
<dbReference type="DrugBank" id="DB12778">
    <property type="generic name" value="Rivipansel"/>
</dbReference>
<dbReference type="DrugBank" id="DB14829">
    <property type="generic name" value="Uproleselan"/>
</dbReference>
<dbReference type="GuidetoPHARMACOLOGY" id="3200"/>
<dbReference type="UniLectin" id="P16581"/>
<dbReference type="GlyCosmos" id="P16581">
    <property type="glycosylation" value="11 sites, No reported glycans"/>
</dbReference>
<dbReference type="GlyGen" id="P16581">
    <property type="glycosylation" value="11 sites"/>
</dbReference>
<dbReference type="iPTMnet" id="P16581"/>
<dbReference type="PhosphoSitePlus" id="P16581"/>
<dbReference type="BioMuta" id="SELE"/>
<dbReference type="DMDM" id="126180"/>
<dbReference type="MassIVE" id="P16581"/>
<dbReference type="PaxDb" id="9606-ENSP00000331736"/>
<dbReference type="PeptideAtlas" id="P16581"/>
<dbReference type="ProteomicsDB" id="53381"/>
<dbReference type="ABCD" id="P16581">
    <property type="antibodies" value="13 sequenced antibodies"/>
</dbReference>
<dbReference type="Antibodypedia" id="3682">
    <property type="antibodies" value="1284 antibodies from 45 providers"/>
</dbReference>
<dbReference type="DNASU" id="6401"/>
<dbReference type="Ensembl" id="ENST00000333360.12">
    <property type="protein sequence ID" value="ENSP00000331736.7"/>
    <property type="gene ID" value="ENSG00000007908.16"/>
</dbReference>
<dbReference type="GeneID" id="6401"/>
<dbReference type="KEGG" id="hsa:6401"/>
<dbReference type="MANE-Select" id="ENST00000333360.12">
    <property type="protein sequence ID" value="ENSP00000331736.7"/>
    <property type="RefSeq nucleotide sequence ID" value="NM_000450.2"/>
    <property type="RefSeq protein sequence ID" value="NP_000441.2"/>
</dbReference>
<dbReference type="UCSC" id="uc001ggm.5">
    <property type="organism name" value="human"/>
</dbReference>
<dbReference type="AGR" id="HGNC:10718"/>
<dbReference type="CTD" id="6401"/>
<dbReference type="DisGeNET" id="6401"/>
<dbReference type="GeneCards" id="SELE"/>
<dbReference type="HGNC" id="HGNC:10718">
    <property type="gene designation" value="SELE"/>
</dbReference>
<dbReference type="HPA" id="ENSG00000007908">
    <property type="expression patterns" value="Tissue enhanced (urinary)"/>
</dbReference>
<dbReference type="MalaCards" id="SELE"/>
<dbReference type="MIM" id="131210">
    <property type="type" value="gene"/>
</dbReference>
<dbReference type="neXtProt" id="NX_P16581"/>
<dbReference type="OpenTargets" id="ENSG00000007908"/>
<dbReference type="PharmGKB" id="PA35640"/>
<dbReference type="VEuPathDB" id="HostDB:ENSG00000007908"/>
<dbReference type="eggNOG" id="KOG4297">
    <property type="taxonomic scope" value="Eukaryota"/>
</dbReference>
<dbReference type="GeneTree" id="ENSGT00940000160168"/>
<dbReference type="InParanoid" id="P16581"/>
<dbReference type="OMA" id="FSYGNTC"/>
<dbReference type="OrthoDB" id="406096at2759"/>
<dbReference type="PAN-GO" id="P16581">
    <property type="GO annotations" value="7 GO annotations based on evolutionary models"/>
</dbReference>
<dbReference type="PhylomeDB" id="P16581"/>
<dbReference type="TreeFam" id="TF326910"/>
<dbReference type="PathwayCommons" id="P16581"/>
<dbReference type="Reactome" id="R-HSA-202733">
    <property type="pathway name" value="Cell surface interactions at the vascular wall"/>
</dbReference>
<dbReference type="SignaLink" id="P16581"/>
<dbReference type="SIGNOR" id="P16581"/>
<dbReference type="BioGRID-ORCS" id="6401">
    <property type="hits" value="11 hits in 1152 CRISPR screens"/>
</dbReference>
<dbReference type="ChiTaRS" id="SELE">
    <property type="organism name" value="human"/>
</dbReference>
<dbReference type="EvolutionaryTrace" id="P16581"/>
<dbReference type="GeneWiki" id="E-selectin"/>
<dbReference type="GenomeRNAi" id="6401"/>
<dbReference type="Pharos" id="P16581">
    <property type="development level" value="Tchem"/>
</dbReference>
<dbReference type="PRO" id="PR:P16581"/>
<dbReference type="Proteomes" id="UP000005640">
    <property type="component" value="Chromosome 1"/>
</dbReference>
<dbReference type="RNAct" id="P16581">
    <property type="molecule type" value="protein"/>
</dbReference>
<dbReference type="Bgee" id="ENSG00000007908">
    <property type="expression patterns" value="Expressed in vena cava and 146 other cell types or tissues"/>
</dbReference>
<dbReference type="ExpressionAtlas" id="P16581">
    <property type="expression patterns" value="baseline and differential"/>
</dbReference>
<dbReference type="GO" id="GO:0005901">
    <property type="term" value="C:caveola"/>
    <property type="evidence" value="ECO:0000314"/>
    <property type="project" value="BHF-UCL"/>
</dbReference>
<dbReference type="GO" id="GO:0005905">
    <property type="term" value="C:clathrin-coated pit"/>
    <property type="evidence" value="ECO:0000314"/>
    <property type="project" value="BHF-UCL"/>
</dbReference>
<dbReference type="GO" id="GO:0030863">
    <property type="term" value="C:cortical cytoskeleton"/>
    <property type="evidence" value="ECO:0000314"/>
    <property type="project" value="BHF-UCL"/>
</dbReference>
<dbReference type="GO" id="GO:0009897">
    <property type="term" value="C:external side of plasma membrane"/>
    <property type="evidence" value="ECO:0000318"/>
    <property type="project" value="GO_Central"/>
</dbReference>
<dbReference type="GO" id="GO:0005615">
    <property type="term" value="C:extracellular space"/>
    <property type="evidence" value="ECO:0000314"/>
    <property type="project" value="BHF-UCL"/>
</dbReference>
<dbReference type="GO" id="GO:0045121">
    <property type="term" value="C:membrane raft"/>
    <property type="evidence" value="ECO:0000314"/>
    <property type="project" value="BHF-UCL"/>
</dbReference>
<dbReference type="GO" id="GO:0048471">
    <property type="term" value="C:perinuclear region of cytoplasm"/>
    <property type="evidence" value="ECO:0000314"/>
    <property type="project" value="BHF-UCL"/>
</dbReference>
<dbReference type="GO" id="GO:0005886">
    <property type="term" value="C:plasma membrane"/>
    <property type="evidence" value="ECO:0000314"/>
    <property type="project" value="UniProtKB"/>
</dbReference>
<dbReference type="GO" id="GO:0046872">
    <property type="term" value="F:metal ion binding"/>
    <property type="evidence" value="ECO:0007669"/>
    <property type="project" value="UniProtKB-KW"/>
</dbReference>
<dbReference type="GO" id="GO:0070492">
    <property type="term" value="F:oligosaccharide binding"/>
    <property type="evidence" value="ECO:0000314"/>
    <property type="project" value="BHF-UCL"/>
</dbReference>
<dbReference type="GO" id="GO:0043274">
    <property type="term" value="F:phospholipase binding"/>
    <property type="evidence" value="ECO:0000314"/>
    <property type="project" value="BHF-UCL"/>
</dbReference>
<dbReference type="GO" id="GO:0033691">
    <property type="term" value="F:sialic acid binding"/>
    <property type="evidence" value="ECO:0000314"/>
    <property type="project" value="BHF-UCL"/>
</dbReference>
<dbReference type="GO" id="GO:0004888">
    <property type="term" value="F:transmembrane signaling receptor activity"/>
    <property type="evidence" value="ECO:0000315"/>
    <property type="project" value="BHF-UCL"/>
</dbReference>
<dbReference type="GO" id="GO:0030029">
    <property type="term" value="P:actin filament-based process"/>
    <property type="evidence" value="ECO:0000314"/>
    <property type="project" value="BHF-UCL"/>
</dbReference>
<dbReference type="GO" id="GO:0019722">
    <property type="term" value="P:calcium-mediated signaling"/>
    <property type="evidence" value="ECO:0000304"/>
    <property type="project" value="BHF-UCL"/>
</dbReference>
<dbReference type="GO" id="GO:0007157">
    <property type="term" value="P:heterophilic cell-cell adhesion via plasma membrane cell adhesion molecules"/>
    <property type="evidence" value="ECO:0000315"/>
    <property type="project" value="BHF-UCL"/>
</dbReference>
<dbReference type="GO" id="GO:0006954">
    <property type="term" value="P:inflammatory response"/>
    <property type="evidence" value="ECO:0000304"/>
    <property type="project" value="ProtInc"/>
</dbReference>
<dbReference type="GO" id="GO:0007159">
    <property type="term" value="P:leukocyte cell-cell adhesion"/>
    <property type="evidence" value="ECO:0000314"/>
    <property type="project" value="BHF-UCL"/>
</dbReference>
<dbReference type="GO" id="GO:0002523">
    <property type="term" value="P:leukocyte migration involved in inflammatory response"/>
    <property type="evidence" value="ECO:0000304"/>
    <property type="project" value="BHF-UCL"/>
</dbReference>
<dbReference type="GO" id="GO:0050901">
    <property type="term" value="P:leukocyte tethering or rolling"/>
    <property type="evidence" value="ECO:0000315"/>
    <property type="project" value="BHF-UCL"/>
</dbReference>
<dbReference type="GO" id="GO:0007200">
    <property type="term" value="P:phospholipase C-activating G protein-coupled receptor signaling pathway"/>
    <property type="evidence" value="ECO:0000315"/>
    <property type="project" value="BHF-UCL"/>
</dbReference>
<dbReference type="GO" id="GO:0002687">
    <property type="term" value="P:positive regulation of leukocyte migration"/>
    <property type="evidence" value="ECO:0007669"/>
    <property type="project" value="Ensembl"/>
</dbReference>
<dbReference type="GO" id="GO:1903238">
    <property type="term" value="P:positive regulation of leukocyte tethering or rolling"/>
    <property type="evidence" value="ECO:0000250"/>
    <property type="project" value="UniProtKB"/>
</dbReference>
<dbReference type="GO" id="GO:0002092">
    <property type="term" value="P:positive regulation of receptor internalization"/>
    <property type="evidence" value="ECO:0000314"/>
    <property type="project" value="BHF-UCL"/>
</dbReference>
<dbReference type="GO" id="GO:0050727">
    <property type="term" value="P:regulation of inflammatory response"/>
    <property type="evidence" value="ECO:0000304"/>
    <property type="project" value="BHF-UCL"/>
</dbReference>
<dbReference type="GO" id="GO:0034097">
    <property type="term" value="P:response to cytokine"/>
    <property type="evidence" value="ECO:0000318"/>
    <property type="project" value="GO_Central"/>
</dbReference>
<dbReference type="GO" id="GO:0070555">
    <property type="term" value="P:response to interleukin-1"/>
    <property type="evidence" value="ECO:0000314"/>
    <property type="project" value="BHF-UCL"/>
</dbReference>
<dbReference type="GO" id="GO:0032496">
    <property type="term" value="P:response to lipopolysaccharide"/>
    <property type="evidence" value="ECO:0000304"/>
    <property type="project" value="BHF-UCL"/>
</dbReference>
<dbReference type="GO" id="GO:0034612">
    <property type="term" value="P:response to tumor necrosis factor"/>
    <property type="evidence" value="ECO:0000304"/>
    <property type="project" value="BHF-UCL"/>
</dbReference>
<dbReference type="CDD" id="cd00033">
    <property type="entry name" value="CCP"/>
    <property type="match status" value="6"/>
</dbReference>
<dbReference type="CDD" id="cd03592">
    <property type="entry name" value="CLECT_selectins_like"/>
    <property type="match status" value="1"/>
</dbReference>
<dbReference type="CDD" id="cd00054">
    <property type="entry name" value="EGF_CA"/>
    <property type="match status" value="1"/>
</dbReference>
<dbReference type="FunFam" id="3.10.100.10:FF:000007">
    <property type="entry name" value="L-selectin"/>
    <property type="match status" value="1"/>
</dbReference>
<dbReference type="FunFam" id="2.10.25.10:FF:000176">
    <property type="entry name" value="Selectin P"/>
    <property type="match status" value="1"/>
</dbReference>
<dbReference type="FunFam" id="2.10.70.10:FF:000001">
    <property type="entry name" value="Selectin P"/>
    <property type="match status" value="5"/>
</dbReference>
<dbReference type="Gene3D" id="2.10.70.10">
    <property type="entry name" value="Complement Module, domain 1"/>
    <property type="match status" value="6"/>
</dbReference>
<dbReference type="Gene3D" id="3.10.100.10">
    <property type="entry name" value="Mannose-Binding Protein A, subunit A"/>
    <property type="match status" value="1"/>
</dbReference>
<dbReference type="IDEAL" id="IID00351"/>
<dbReference type="InterPro" id="IPR001304">
    <property type="entry name" value="C-type_lectin-like"/>
</dbReference>
<dbReference type="InterPro" id="IPR016186">
    <property type="entry name" value="C-type_lectin-like/link_sf"/>
</dbReference>
<dbReference type="InterPro" id="IPR018378">
    <property type="entry name" value="C-type_lectin_CS"/>
</dbReference>
<dbReference type="InterPro" id="IPR016187">
    <property type="entry name" value="CTDL_fold"/>
</dbReference>
<dbReference type="InterPro" id="IPR000742">
    <property type="entry name" value="EGF-like_dom"/>
</dbReference>
<dbReference type="InterPro" id="IPR033991">
    <property type="entry name" value="Selectin_CTLD"/>
</dbReference>
<dbReference type="InterPro" id="IPR002396">
    <property type="entry name" value="Selectin_superfamily"/>
</dbReference>
<dbReference type="InterPro" id="IPR035976">
    <property type="entry name" value="Sushi/SCR/CCP_sf"/>
</dbReference>
<dbReference type="InterPro" id="IPR000436">
    <property type="entry name" value="Sushi_SCR_CCP_dom"/>
</dbReference>
<dbReference type="PANTHER" id="PTHR46393:SF7">
    <property type="entry name" value="COMPLEMENT C2"/>
    <property type="match status" value="1"/>
</dbReference>
<dbReference type="PANTHER" id="PTHR46393">
    <property type="entry name" value="SUSHI DOMAIN-CONTAINING PROTEIN"/>
    <property type="match status" value="1"/>
</dbReference>
<dbReference type="Pfam" id="PF00008">
    <property type="entry name" value="EGF"/>
    <property type="match status" value="1"/>
</dbReference>
<dbReference type="Pfam" id="PF00059">
    <property type="entry name" value="Lectin_C"/>
    <property type="match status" value="1"/>
</dbReference>
<dbReference type="Pfam" id="PF00084">
    <property type="entry name" value="Sushi"/>
    <property type="match status" value="6"/>
</dbReference>
<dbReference type="PRINTS" id="PR00343">
    <property type="entry name" value="SELECTIN"/>
</dbReference>
<dbReference type="SMART" id="SM00032">
    <property type="entry name" value="CCP"/>
    <property type="match status" value="6"/>
</dbReference>
<dbReference type="SMART" id="SM00034">
    <property type="entry name" value="CLECT"/>
    <property type="match status" value="1"/>
</dbReference>
<dbReference type="SMART" id="SM00181">
    <property type="entry name" value="EGF"/>
    <property type="match status" value="2"/>
</dbReference>
<dbReference type="SUPFAM" id="SSF56436">
    <property type="entry name" value="C-type lectin-like"/>
    <property type="match status" value="1"/>
</dbReference>
<dbReference type="SUPFAM" id="SSF57535">
    <property type="entry name" value="Complement control module/SCR domain"/>
    <property type="match status" value="6"/>
</dbReference>
<dbReference type="PROSITE" id="PS00615">
    <property type="entry name" value="C_TYPE_LECTIN_1"/>
    <property type="match status" value="1"/>
</dbReference>
<dbReference type="PROSITE" id="PS50041">
    <property type="entry name" value="C_TYPE_LECTIN_2"/>
    <property type="match status" value="1"/>
</dbReference>
<dbReference type="PROSITE" id="PS00022">
    <property type="entry name" value="EGF_1"/>
    <property type="match status" value="1"/>
</dbReference>
<dbReference type="PROSITE" id="PS01186">
    <property type="entry name" value="EGF_2"/>
    <property type="match status" value="1"/>
</dbReference>
<dbReference type="PROSITE" id="PS50026">
    <property type="entry name" value="EGF_3"/>
    <property type="match status" value="1"/>
</dbReference>
<dbReference type="PROSITE" id="PS50923">
    <property type="entry name" value="SUSHI"/>
    <property type="match status" value="6"/>
</dbReference>
<organism>
    <name type="scientific">Homo sapiens</name>
    <name type="common">Human</name>
    <dbReference type="NCBI Taxonomy" id="9606"/>
    <lineage>
        <taxon>Eukaryota</taxon>
        <taxon>Metazoa</taxon>
        <taxon>Chordata</taxon>
        <taxon>Craniata</taxon>
        <taxon>Vertebrata</taxon>
        <taxon>Euteleostomi</taxon>
        <taxon>Mammalia</taxon>
        <taxon>Eutheria</taxon>
        <taxon>Euarchontoglires</taxon>
        <taxon>Primates</taxon>
        <taxon>Haplorrhini</taxon>
        <taxon>Catarrhini</taxon>
        <taxon>Hominidae</taxon>
        <taxon>Homo</taxon>
    </lineage>
</organism>
<sequence length="610" mass="66655">MIASQFLSALTLVLLIKESGAWSYNTSTEAMTYDEASAYCQQRYTHLVAIQNKEEIEYLNSILSYSPSYYWIGIRKVNNVWVWVGTQKPLTEEAKNWAPGEPNNRQKDEDCVEIYIKREKDVGMWNDERCSKKKLALCYTAACTNTSCSGHGECVETINNYTCKCDPGFSGLKCEQIVNCTALESPEHGSLVCSHPLGNFSYNSSCSISCDRGYLPSSMETMQCMSSGEWSAPIPACNVVECDAVTNPANGFVECFQNPGSFPWNTTCTFDCEEGFELMGAQSLQCTSSGNWDNEKPTCKAVTCRAVRQPQNGSVRCSHSPAGEFTFKSSCNFTCEEGFMLQGPAQVECTTQGQWTQQIPVCEAFQCTALSNPERGYMNCLPSASGSFRYGSSCEFSCEQGFVLKGSKRLQCGPTGEWDNEKPTCEAVRCDAVHQPPKGLVRCAHSPIGEFTYKSSCAFSCEEGFELHGSTQLECTSQGQWTEEVPSCQVVKCSSLAVPGKINMSCSGEPVFGTVCKFACPEGWTLNGSAARTCGATGHWSGLLPTCEAPTESNIPLVAGLSAAGLSLLTLAPFLLWLRKCLRKAKKFVPASSCQSLESDGSYQKPSYIL</sequence>
<protein>
    <recommendedName>
        <fullName>E-selectin</fullName>
    </recommendedName>
    <alternativeName>
        <fullName>CD62 antigen-like family member E</fullName>
    </alternativeName>
    <alternativeName>
        <fullName>Endothelial leukocyte adhesion molecule 1</fullName>
        <shortName>ELAM-1</shortName>
    </alternativeName>
    <alternativeName>
        <fullName>Leukocyte-endothelial cell adhesion molecule 2</fullName>
        <shortName>LECAM2</shortName>
    </alternativeName>
    <cdAntigenName>CD62E</cdAntigenName>
</protein>
<proteinExistence type="evidence at protein level"/>
<comment type="function">
    <text evidence="10 15">Cell-surface glycoprotein having a role in immunoadhesion. Mediates in the adhesion of blood neutrophils in cytokine-activated endothelium through interaction with SELPLG/PSGL1. May have a role in capillary morphogenesis.</text>
</comment>
<comment type="subunit">
    <text evidence="8 11">Interacts with SELPLG/PSGL1 and PODXL2 through the sialyl Lewis X epitope. SELPLG sulfation appears not to be required for this interaction.</text>
</comment>
<comment type="interaction">
    <interactant intactId="EBI-8007671">
        <id>P16581</id>
    </interactant>
    <interactant intactId="EBI-946046">
        <id>P54252</id>
        <label>ATXN3</label>
    </interactant>
    <organismsDiffer>false</organismsDiffer>
    <experiments>3</experiments>
</comment>
<comment type="interaction">
    <interactant intactId="EBI-8007671">
        <id>P16581</id>
    </interactant>
    <interactant intactId="EBI-5235340">
        <id>Q7Z699</id>
        <label>SPRED1</label>
    </interactant>
    <organismsDiffer>false</organismsDiffer>
    <experiments>3</experiments>
</comment>
<comment type="interaction">
    <interactant intactId="EBI-8007671">
        <id>P16581</id>
    </interactant>
    <interactant intactId="EBI-720609">
        <id>O76024</id>
        <label>WFS1</label>
    </interactant>
    <organismsDiffer>false</organismsDiffer>
    <experiments>3</experiments>
</comment>
<comment type="subcellular location">
    <subcellularLocation>
        <location evidence="9 15">Cell membrane</location>
        <topology>Single-pass type I membrane protein</topology>
    </subcellularLocation>
</comment>
<comment type="polymorphism">
    <text evidence="9 16">A polymorphism in position 149 is associated with a higher risk of coronary artery disease (CAD). A significantly higher mutation frequency (Arg-149) is observed in patients with angiographically proven severe atherosclerosis compared with an unselected population (Ser-149).</text>
</comment>
<comment type="similarity">
    <text evidence="20">Belongs to the selectin/LECAM family.</text>
</comment>
<comment type="online information" name="Atlas of Genetics and Cytogenetics in Oncology and Haematology">
    <link uri="https://atlasgeneticsoncology.org/gene/42247/SELE"/>
</comment>
<comment type="online information" name="Functional Glycomics Gateway - Glycan Binding">
    <link uri="http://www.functionalglycomics.org/glycomics/GBPServlet?&amp;operationType=view&amp;cbpId=cbp_hum_Ctlect_233"/>
    <text>E-selectin</text>
</comment>
<gene>
    <name type="primary">SELE</name>
    <name type="synonym">ELAM1</name>
</gene>
<keyword id="KW-0002">3D-structure</keyword>
<keyword id="KW-0106">Calcium</keyword>
<keyword id="KW-0130">Cell adhesion</keyword>
<keyword id="KW-1003">Cell membrane</keyword>
<keyword id="KW-1015">Disulfide bond</keyword>
<keyword id="KW-0245">EGF-like domain</keyword>
<keyword id="KW-0325">Glycoprotein</keyword>
<keyword id="KW-0430">Lectin</keyword>
<keyword id="KW-0472">Membrane</keyword>
<keyword id="KW-0479">Metal-binding</keyword>
<keyword id="KW-1267">Proteomics identification</keyword>
<keyword id="KW-1185">Reference proteome</keyword>
<keyword id="KW-0677">Repeat</keyword>
<keyword id="KW-0732">Signal</keyword>
<keyword id="KW-0768">Sushi</keyword>
<keyword id="KW-0812">Transmembrane</keyword>
<keyword id="KW-1133">Transmembrane helix</keyword>